<evidence type="ECO:0000255" key="1">
    <source>
        <dbReference type="HAMAP-Rule" id="MF_01315"/>
    </source>
</evidence>
<evidence type="ECO:0000256" key="2">
    <source>
        <dbReference type="SAM" id="MobiDB-lite"/>
    </source>
</evidence>
<evidence type="ECO:0000305" key="3"/>
<organism>
    <name type="scientific">Nitratiruptor sp. (strain SB155-2)</name>
    <dbReference type="NCBI Taxonomy" id="387092"/>
    <lineage>
        <taxon>Bacteria</taxon>
        <taxon>Pseudomonadati</taxon>
        <taxon>Campylobacterota</taxon>
        <taxon>Epsilonproteobacteria</taxon>
        <taxon>Nautiliales</taxon>
        <taxon>Nitratiruptoraceae</taxon>
        <taxon>Nitratiruptor</taxon>
    </lineage>
</organism>
<dbReference type="EMBL" id="AP009178">
    <property type="protein sequence ID" value="BAF69360.1"/>
    <property type="molecule type" value="Genomic_DNA"/>
</dbReference>
<dbReference type="RefSeq" id="WP_012081623.1">
    <property type="nucleotide sequence ID" value="NC_009662.1"/>
</dbReference>
<dbReference type="SMR" id="A6Q1K1"/>
<dbReference type="FunCoup" id="A6Q1K1">
    <property type="interactions" value="499"/>
</dbReference>
<dbReference type="STRING" id="387092.NIS_0246"/>
<dbReference type="KEGG" id="nis:NIS_0246"/>
<dbReference type="eggNOG" id="COG0099">
    <property type="taxonomic scope" value="Bacteria"/>
</dbReference>
<dbReference type="HOGENOM" id="CLU_103849_1_2_7"/>
<dbReference type="InParanoid" id="A6Q1K1"/>
<dbReference type="OrthoDB" id="9803610at2"/>
<dbReference type="Proteomes" id="UP000001118">
    <property type="component" value="Chromosome"/>
</dbReference>
<dbReference type="GO" id="GO:0005829">
    <property type="term" value="C:cytosol"/>
    <property type="evidence" value="ECO:0007669"/>
    <property type="project" value="TreeGrafter"/>
</dbReference>
<dbReference type="GO" id="GO:0015935">
    <property type="term" value="C:small ribosomal subunit"/>
    <property type="evidence" value="ECO:0007669"/>
    <property type="project" value="TreeGrafter"/>
</dbReference>
<dbReference type="GO" id="GO:0019843">
    <property type="term" value="F:rRNA binding"/>
    <property type="evidence" value="ECO:0007669"/>
    <property type="project" value="UniProtKB-UniRule"/>
</dbReference>
<dbReference type="GO" id="GO:0003735">
    <property type="term" value="F:structural constituent of ribosome"/>
    <property type="evidence" value="ECO:0007669"/>
    <property type="project" value="InterPro"/>
</dbReference>
<dbReference type="GO" id="GO:0000049">
    <property type="term" value="F:tRNA binding"/>
    <property type="evidence" value="ECO:0007669"/>
    <property type="project" value="UniProtKB-UniRule"/>
</dbReference>
<dbReference type="GO" id="GO:0006412">
    <property type="term" value="P:translation"/>
    <property type="evidence" value="ECO:0007669"/>
    <property type="project" value="UniProtKB-UniRule"/>
</dbReference>
<dbReference type="FunFam" id="1.10.8.50:FF:000001">
    <property type="entry name" value="30S ribosomal protein S13"/>
    <property type="match status" value="1"/>
</dbReference>
<dbReference type="FunFam" id="4.10.910.10:FF:000001">
    <property type="entry name" value="30S ribosomal protein S13"/>
    <property type="match status" value="1"/>
</dbReference>
<dbReference type="Gene3D" id="1.10.8.50">
    <property type="match status" value="1"/>
</dbReference>
<dbReference type="Gene3D" id="4.10.910.10">
    <property type="entry name" value="30s ribosomal protein s13, domain 2"/>
    <property type="match status" value="1"/>
</dbReference>
<dbReference type="HAMAP" id="MF_01315">
    <property type="entry name" value="Ribosomal_uS13"/>
    <property type="match status" value="1"/>
</dbReference>
<dbReference type="InterPro" id="IPR027437">
    <property type="entry name" value="Rbsml_uS13_C"/>
</dbReference>
<dbReference type="InterPro" id="IPR001892">
    <property type="entry name" value="Ribosomal_uS13"/>
</dbReference>
<dbReference type="InterPro" id="IPR010979">
    <property type="entry name" value="Ribosomal_uS13-like_H2TH"/>
</dbReference>
<dbReference type="InterPro" id="IPR019980">
    <property type="entry name" value="Ribosomal_uS13_bac-type"/>
</dbReference>
<dbReference type="InterPro" id="IPR018269">
    <property type="entry name" value="Ribosomal_uS13_CS"/>
</dbReference>
<dbReference type="NCBIfam" id="TIGR03631">
    <property type="entry name" value="uS13_bact"/>
    <property type="match status" value="1"/>
</dbReference>
<dbReference type="PANTHER" id="PTHR10871">
    <property type="entry name" value="30S RIBOSOMAL PROTEIN S13/40S RIBOSOMAL PROTEIN S18"/>
    <property type="match status" value="1"/>
</dbReference>
<dbReference type="PANTHER" id="PTHR10871:SF1">
    <property type="entry name" value="SMALL RIBOSOMAL SUBUNIT PROTEIN US13M"/>
    <property type="match status" value="1"/>
</dbReference>
<dbReference type="Pfam" id="PF00416">
    <property type="entry name" value="Ribosomal_S13"/>
    <property type="match status" value="1"/>
</dbReference>
<dbReference type="PIRSF" id="PIRSF002134">
    <property type="entry name" value="Ribosomal_S13"/>
    <property type="match status" value="1"/>
</dbReference>
<dbReference type="SUPFAM" id="SSF46946">
    <property type="entry name" value="S13-like H2TH domain"/>
    <property type="match status" value="1"/>
</dbReference>
<dbReference type="PROSITE" id="PS00646">
    <property type="entry name" value="RIBOSOMAL_S13_1"/>
    <property type="match status" value="1"/>
</dbReference>
<dbReference type="PROSITE" id="PS50159">
    <property type="entry name" value="RIBOSOMAL_S13_2"/>
    <property type="match status" value="1"/>
</dbReference>
<reference key="1">
    <citation type="journal article" date="2007" name="Proc. Natl. Acad. Sci. U.S.A.">
        <title>Deep-sea vent epsilon-proteobacterial genomes provide insights into emergence of pathogens.</title>
        <authorList>
            <person name="Nakagawa S."/>
            <person name="Takaki Y."/>
            <person name="Shimamura S."/>
            <person name="Reysenbach A.-L."/>
            <person name="Takai K."/>
            <person name="Horikoshi K."/>
        </authorList>
    </citation>
    <scope>NUCLEOTIDE SEQUENCE [LARGE SCALE GENOMIC DNA]</scope>
    <source>
        <strain>SB155-2</strain>
    </source>
</reference>
<comment type="function">
    <text evidence="1">Located at the top of the head of the 30S subunit, it contacts several helices of the 16S rRNA. In the 70S ribosome it contacts the 23S rRNA (bridge B1a) and protein L5 of the 50S subunit (bridge B1b), connecting the 2 subunits; these bridges are implicated in subunit movement. Contacts the tRNAs in the A and P-sites.</text>
</comment>
<comment type="subunit">
    <text evidence="1">Part of the 30S ribosomal subunit. Forms a loose heterodimer with protein S19. Forms two bridges to the 50S subunit in the 70S ribosome.</text>
</comment>
<comment type="similarity">
    <text evidence="1">Belongs to the universal ribosomal protein uS13 family.</text>
</comment>
<sequence length="120" mass="13677">MARIAGVDLPKNKRIEYALPYVYGIGLTTSRKILDAVGISYDKRVYELTEDEVAAINKHIRENYMVEGDLRRKVAMDIKALMDIGCYRGLRHRRGLPVRGQRTKTNARTRKGKKKTVGAK</sequence>
<protein>
    <recommendedName>
        <fullName evidence="1">Small ribosomal subunit protein uS13</fullName>
    </recommendedName>
    <alternativeName>
        <fullName evidence="3">30S ribosomal protein S13</fullName>
    </alternativeName>
</protein>
<gene>
    <name evidence="1" type="primary">rpsM</name>
    <name type="ordered locus">NIS_0246</name>
</gene>
<name>RS13_NITSB</name>
<accession>A6Q1K1</accession>
<keyword id="KW-1185">Reference proteome</keyword>
<keyword id="KW-0687">Ribonucleoprotein</keyword>
<keyword id="KW-0689">Ribosomal protein</keyword>
<keyword id="KW-0694">RNA-binding</keyword>
<keyword id="KW-0699">rRNA-binding</keyword>
<keyword id="KW-0820">tRNA-binding</keyword>
<feature type="chain" id="PRO_0000306661" description="Small ribosomal subunit protein uS13">
    <location>
        <begin position="1"/>
        <end position="120"/>
    </location>
</feature>
<feature type="region of interest" description="Disordered" evidence="2">
    <location>
        <begin position="97"/>
        <end position="120"/>
    </location>
</feature>
<proteinExistence type="inferred from homology"/>